<evidence type="ECO:0000255" key="1">
    <source>
        <dbReference type="HAMAP-Rule" id="MF_00105"/>
    </source>
</evidence>
<gene>
    <name evidence="1" type="primary">greA</name>
    <name type="ordered locus">lmo1496</name>
</gene>
<organism>
    <name type="scientific">Listeria monocytogenes serovar 1/2a (strain ATCC BAA-679 / EGD-e)</name>
    <dbReference type="NCBI Taxonomy" id="169963"/>
    <lineage>
        <taxon>Bacteria</taxon>
        <taxon>Bacillati</taxon>
        <taxon>Bacillota</taxon>
        <taxon>Bacilli</taxon>
        <taxon>Bacillales</taxon>
        <taxon>Listeriaceae</taxon>
        <taxon>Listeria</taxon>
    </lineage>
</organism>
<reference key="1">
    <citation type="journal article" date="2001" name="Science">
        <title>Comparative genomics of Listeria species.</title>
        <authorList>
            <person name="Glaser P."/>
            <person name="Frangeul L."/>
            <person name="Buchrieser C."/>
            <person name="Rusniok C."/>
            <person name="Amend A."/>
            <person name="Baquero F."/>
            <person name="Berche P."/>
            <person name="Bloecker H."/>
            <person name="Brandt P."/>
            <person name="Chakraborty T."/>
            <person name="Charbit A."/>
            <person name="Chetouani F."/>
            <person name="Couve E."/>
            <person name="de Daruvar A."/>
            <person name="Dehoux P."/>
            <person name="Domann E."/>
            <person name="Dominguez-Bernal G."/>
            <person name="Duchaud E."/>
            <person name="Durant L."/>
            <person name="Dussurget O."/>
            <person name="Entian K.-D."/>
            <person name="Fsihi H."/>
            <person name="Garcia-del Portillo F."/>
            <person name="Garrido P."/>
            <person name="Gautier L."/>
            <person name="Goebel W."/>
            <person name="Gomez-Lopez N."/>
            <person name="Hain T."/>
            <person name="Hauf J."/>
            <person name="Jackson D."/>
            <person name="Jones L.-M."/>
            <person name="Kaerst U."/>
            <person name="Kreft J."/>
            <person name="Kuhn M."/>
            <person name="Kunst F."/>
            <person name="Kurapkat G."/>
            <person name="Madueno E."/>
            <person name="Maitournam A."/>
            <person name="Mata Vicente J."/>
            <person name="Ng E."/>
            <person name="Nedjari H."/>
            <person name="Nordsiek G."/>
            <person name="Novella S."/>
            <person name="de Pablos B."/>
            <person name="Perez-Diaz J.-C."/>
            <person name="Purcell R."/>
            <person name="Remmel B."/>
            <person name="Rose M."/>
            <person name="Schlueter T."/>
            <person name="Simoes N."/>
            <person name="Tierrez A."/>
            <person name="Vazquez-Boland J.-A."/>
            <person name="Voss H."/>
            <person name="Wehland J."/>
            <person name="Cossart P."/>
        </authorList>
    </citation>
    <scope>NUCLEOTIDE SEQUENCE [LARGE SCALE GENOMIC DNA]</scope>
    <source>
        <strain>ATCC BAA-679 / EGD-e</strain>
    </source>
</reference>
<proteinExistence type="inferred from homology"/>
<feature type="chain" id="PRO_0000176938" description="Transcription elongation factor GreA">
    <location>
        <begin position="1"/>
        <end position="160"/>
    </location>
</feature>
<feature type="coiled-coil region" evidence="1">
    <location>
        <begin position="10"/>
        <end position="37"/>
    </location>
</feature>
<keyword id="KW-0175">Coiled coil</keyword>
<keyword id="KW-0238">DNA-binding</keyword>
<keyword id="KW-1185">Reference proteome</keyword>
<keyword id="KW-0804">Transcription</keyword>
<keyword id="KW-0805">Transcription regulation</keyword>
<accession>P64277</accession>
<accession>Q92BL7</accession>
<sequence>MATEKVFPMTLDGKAKLENELQELKTVKRKEVVERIKIARSFGDLSENSEYDSAKDEQAFVEGRITTIENMIRNAQIIDAAEAHNGLVTLGNTVTFIELPDGEEETYTIVGSAEADPFEGKISNDSPIAKGLLGHKEGEEVTIQTPAGDMSVKIEKITAS</sequence>
<name>GREA_LISMO</name>
<protein>
    <recommendedName>
        <fullName evidence="1">Transcription elongation factor GreA</fullName>
    </recommendedName>
    <alternativeName>
        <fullName evidence="1">Transcript cleavage factor GreA</fullName>
    </alternativeName>
</protein>
<dbReference type="EMBL" id="AL591979">
    <property type="protein sequence ID" value="CAC99574.1"/>
    <property type="molecule type" value="Genomic_DNA"/>
</dbReference>
<dbReference type="PIR" id="AH1261">
    <property type="entry name" value="AH1261"/>
</dbReference>
<dbReference type="RefSeq" id="NP_465021.1">
    <property type="nucleotide sequence ID" value="NC_003210.1"/>
</dbReference>
<dbReference type="RefSeq" id="WP_003722004.1">
    <property type="nucleotide sequence ID" value="NZ_CP149495.1"/>
</dbReference>
<dbReference type="SMR" id="P64277"/>
<dbReference type="STRING" id="169963.gene:17594153"/>
<dbReference type="PaxDb" id="169963-lmo1496"/>
<dbReference type="EnsemblBacteria" id="CAC99574">
    <property type="protein sequence ID" value="CAC99574"/>
    <property type="gene ID" value="CAC99574"/>
</dbReference>
<dbReference type="GeneID" id="93239373"/>
<dbReference type="GeneID" id="986962"/>
<dbReference type="KEGG" id="lmo:lmo1496"/>
<dbReference type="PATRIC" id="fig|169963.11.peg.1536"/>
<dbReference type="eggNOG" id="COG0782">
    <property type="taxonomic scope" value="Bacteria"/>
</dbReference>
<dbReference type="HOGENOM" id="CLU_101379_2_1_9"/>
<dbReference type="OrthoDB" id="9808774at2"/>
<dbReference type="PhylomeDB" id="P64277"/>
<dbReference type="BioCyc" id="LMON169963:LMO1496-MONOMER"/>
<dbReference type="Proteomes" id="UP000000817">
    <property type="component" value="Chromosome"/>
</dbReference>
<dbReference type="GO" id="GO:0003677">
    <property type="term" value="F:DNA binding"/>
    <property type="evidence" value="ECO:0007669"/>
    <property type="project" value="UniProtKB-UniRule"/>
</dbReference>
<dbReference type="GO" id="GO:0070063">
    <property type="term" value="F:RNA polymerase binding"/>
    <property type="evidence" value="ECO:0007669"/>
    <property type="project" value="InterPro"/>
</dbReference>
<dbReference type="GO" id="GO:0006354">
    <property type="term" value="P:DNA-templated transcription elongation"/>
    <property type="evidence" value="ECO:0000318"/>
    <property type="project" value="GO_Central"/>
</dbReference>
<dbReference type="GO" id="GO:0032784">
    <property type="term" value="P:regulation of DNA-templated transcription elongation"/>
    <property type="evidence" value="ECO:0007669"/>
    <property type="project" value="UniProtKB-UniRule"/>
</dbReference>
<dbReference type="FunFam" id="1.10.287.180:FF:000001">
    <property type="entry name" value="Transcription elongation factor GreA"/>
    <property type="match status" value="1"/>
</dbReference>
<dbReference type="FunFam" id="3.10.50.30:FF:000001">
    <property type="entry name" value="Transcription elongation factor GreA"/>
    <property type="match status" value="1"/>
</dbReference>
<dbReference type="Gene3D" id="3.10.50.30">
    <property type="entry name" value="Transcription elongation factor, GreA/GreB, C-terminal domain"/>
    <property type="match status" value="1"/>
</dbReference>
<dbReference type="Gene3D" id="1.10.287.180">
    <property type="entry name" value="Transcription elongation factor, GreA/GreB, N-terminal domain"/>
    <property type="match status" value="1"/>
</dbReference>
<dbReference type="HAMAP" id="MF_00105">
    <property type="entry name" value="GreA_GreB"/>
    <property type="match status" value="1"/>
</dbReference>
<dbReference type="InterPro" id="IPR036953">
    <property type="entry name" value="GreA/GreB_C_sf"/>
</dbReference>
<dbReference type="InterPro" id="IPR018151">
    <property type="entry name" value="TF_GreA/GreB_CS"/>
</dbReference>
<dbReference type="InterPro" id="IPR006359">
    <property type="entry name" value="Tscrpt_elong_fac_GreA"/>
</dbReference>
<dbReference type="InterPro" id="IPR028624">
    <property type="entry name" value="Tscrpt_elong_fac_GreA/B"/>
</dbReference>
<dbReference type="InterPro" id="IPR001437">
    <property type="entry name" value="Tscrpt_elong_fac_GreA/B_C"/>
</dbReference>
<dbReference type="InterPro" id="IPR023459">
    <property type="entry name" value="Tscrpt_elong_fac_GreA/B_fam"/>
</dbReference>
<dbReference type="InterPro" id="IPR022691">
    <property type="entry name" value="Tscrpt_elong_fac_GreA/B_N"/>
</dbReference>
<dbReference type="InterPro" id="IPR036805">
    <property type="entry name" value="Tscrpt_elong_fac_GreA/B_N_sf"/>
</dbReference>
<dbReference type="NCBIfam" id="TIGR01462">
    <property type="entry name" value="greA"/>
    <property type="match status" value="1"/>
</dbReference>
<dbReference type="NCBIfam" id="NF001261">
    <property type="entry name" value="PRK00226.1-2"/>
    <property type="match status" value="1"/>
</dbReference>
<dbReference type="NCBIfam" id="NF001263">
    <property type="entry name" value="PRK00226.1-4"/>
    <property type="match status" value="1"/>
</dbReference>
<dbReference type="PANTHER" id="PTHR30437">
    <property type="entry name" value="TRANSCRIPTION ELONGATION FACTOR GREA"/>
    <property type="match status" value="1"/>
</dbReference>
<dbReference type="PANTHER" id="PTHR30437:SF4">
    <property type="entry name" value="TRANSCRIPTION ELONGATION FACTOR GREA"/>
    <property type="match status" value="1"/>
</dbReference>
<dbReference type="Pfam" id="PF01272">
    <property type="entry name" value="GreA_GreB"/>
    <property type="match status" value="1"/>
</dbReference>
<dbReference type="Pfam" id="PF03449">
    <property type="entry name" value="GreA_GreB_N"/>
    <property type="match status" value="1"/>
</dbReference>
<dbReference type="PIRSF" id="PIRSF006092">
    <property type="entry name" value="GreA_GreB"/>
    <property type="match status" value="1"/>
</dbReference>
<dbReference type="SUPFAM" id="SSF54534">
    <property type="entry name" value="FKBP-like"/>
    <property type="match status" value="1"/>
</dbReference>
<dbReference type="SUPFAM" id="SSF46557">
    <property type="entry name" value="GreA transcript cleavage protein, N-terminal domain"/>
    <property type="match status" value="1"/>
</dbReference>
<dbReference type="PROSITE" id="PS00829">
    <property type="entry name" value="GREAB_1"/>
    <property type="match status" value="1"/>
</dbReference>
<dbReference type="PROSITE" id="PS00830">
    <property type="entry name" value="GREAB_2"/>
    <property type="match status" value="1"/>
</dbReference>
<comment type="function">
    <text evidence="1">Necessary for efficient RNA polymerase transcription elongation past template-encoded arresting sites. The arresting sites in DNA have the property of trapping a certain fraction of elongating RNA polymerases that pass through, resulting in locked ternary complexes. Cleavage of the nascent transcript by cleavage factors such as GreA or GreB allows the resumption of elongation from the new 3'terminus. GreA releases sequences of 2 to 3 nucleotides.</text>
</comment>
<comment type="similarity">
    <text evidence="1">Belongs to the GreA/GreB family.</text>
</comment>